<dbReference type="EC" id="5.2.1.8" evidence="1"/>
<dbReference type="EMBL" id="CP001078">
    <property type="protein sequence ID" value="ACD52931.1"/>
    <property type="molecule type" value="Genomic_DNA"/>
</dbReference>
<dbReference type="RefSeq" id="WP_003371787.1">
    <property type="nucleotide sequence ID" value="NC_010723.1"/>
</dbReference>
<dbReference type="SMR" id="B2UX14"/>
<dbReference type="KEGG" id="cbt:CLH_2619"/>
<dbReference type="HOGENOM" id="CLU_033058_3_2_9"/>
<dbReference type="GO" id="GO:0005737">
    <property type="term" value="C:cytoplasm"/>
    <property type="evidence" value="ECO:0007669"/>
    <property type="project" value="UniProtKB-SubCell"/>
</dbReference>
<dbReference type="GO" id="GO:0003755">
    <property type="term" value="F:peptidyl-prolyl cis-trans isomerase activity"/>
    <property type="evidence" value="ECO:0007669"/>
    <property type="project" value="UniProtKB-UniRule"/>
</dbReference>
<dbReference type="GO" id="GO:0044183">
    <property type="term" value="F:protein folding chaperone"/>
    <property type="evidence" value="ECO:0007669"/>
    <property type="project" value="TreeGrafter"/>
</dbReference>
<dbReference type="GO" id="GO:0043022">
    <property type="term" value="F:ribosome binding"/>
    <property type="evidence" value="ECO:0007669"/>
    <property type="project" value="TreeGrafter"/>
</dbReference>
<dbReference type="GO" id="GO:0051083">
    <property type="term" value="P:'de novo' cotranslational protein folding"/>
    <property type="evidence" value="ECO:0007669"/>
    <property type="project" value="TreeGrafter"/>
</dbReference>
<dbReference type="GO" id="GO:0051301">
    <property type="term" value="P:cell division"/>
    <property type="evidence" value="ECO:0007669"/>
    <property type="project" value="UniProtKB-KW"/>
</dbReference>
<dbReference type="GO" id="GO:0061077">
    <property type="term" value="P:chaperone-mediated protein folding"/>
    <property type="evidence" value="ECO:0007669"/>
    <property type="project" value="TreeGrafter"/>
</dbReference>
<dbReference type="GO" id="GO:0015031">
    <property type="term" value="P:protein transport"/>
    <property type="evidence" value="ECO:0007669"/>
    <property type="project" value="UniProtKB-UniRule"/>
</dbReference>
<dbReference type="GO" id="GO:0043335">
    <property type="term" value="P:protein unfolding"/>
    <property type="evidence" value="ECO:0007669"/>
    <property type="project" value="TreeGrafter"/>
</dbReference>
<dbReference type="FunFam" id="3.10.50.40:FF:000001">
    <property type="entry name" value="Trigger factor"/>
    <property type="match status" value="1"/>
</dbReference>
<dbReference type="Gene3D" id="3.10.50.40">
    <property type="match status" value="1"/>
</dbReference>
<dbReference type="Gene3D" id="3.30.70.1050">
    <property type="entry name" value="Trigger factor ribosome-binding domain"/>
    <property type="match status" value="1"/>
</dbReference>
<dbReference type="Gene3D" id="1.10.3120.10">
    <property type="entry name" value="Trigger factor, C-terminal domain"/>
    <property type="match status" value="1"/>
</dbReference>
<dbReference type="HAMAP" id="MF_00303">
    <property type="entry name" value="Trigger_factor_Tig"/>
    <property type="match status" value="1"/>
</dbReference>
<dbReference type="InterPro" id="IPR046357">
    <property type="entry name" value="PPIase_dom_sf"/>
</dbReference>
<dbReference type="InterPro" id="IPR001179">
    <property type="entry name" value="PPIase_FKBP_dom"/>
</dbReference>
<dbReference type="InterPro" id="IPR005215">
    <property type="entry name" value="Trig_fac"/>
</dbReference>
<dbReference type="InterPro" id="IPR008880">
    <property type="entry name" value="Trigger_fac_C"/>
</dbReference>
<dbReference type="InterPro" id="IPR037041">
    <property type="entry name" value="Trigger_fac_C_sf"/>
</dbReference>
<dbReference type="InterPro" id="IPR008881">
    <property type="entry name" value="Trigger_fac_ribosome-bd_bac"/>
</dbReference>
<dbReference type="InterPro" id="IPR036611">
    <property type="entry name" value="Trigger_fac_ribosome-bd_sf"/>
</dbReference>
<dbReference type="InterPro" id="IPR027304">
    <property type="entry name" value="Trigger_fact/SurA_dom_sf"/>
</dbReference>
<dbReference type="NCBIfam" id="TIGR00115">
    <property type="entry name" value="tig"/>
    <property type="match status" value="1"/>
</dbReference>
<dbReference type="PANTHER" id="PTHR30560">
    <property type="entry name" value="TRIGGER FACTOR CHAPERONE AND PEPTIDYL-PROLYL CIS/TRANS ISOMERASE"/>
    <property type="match status" value="1"/>
</dbReference>
<dbReference type="PANTHER" id="PTHR30560:SF3">
    <property type="entry name" value="TRIGGER FACTOR-LIKE PROTEIN TIG, CHLOROPLASTIC"/>
    <property type="match status" value="1"/>
</dbReference>
<dbReference type="Pfam" id="PF00254">
    <property type="entry name" value="FKBP_C"/>
    <property type="match status" value="1"/>
</dbReference>
<dbReference type="Pfam" id="PF05698">
    <property type="entry name" value="Trigger_C"/>
    <property type="match status" value="1"/>
</dbReference>
<dbReference type="Pfam" id="PF05697">
    <property type="entry name" value="Trigger_N"/>
    <property type="match status" value="1"/>
</dbReference>
<dbReference type="PIRSF" id="PIRSF003095">
    <property type="entry name" value="Trigger_factor"/>
    <property type="match status" value="1"/>
</dbReference>
<dbReference type="SUPFAM" id="SSF54534">
    <property type="entry name" value="FKBP-like"/>
    <property type="match status" value="1"/>
</dbReference>
<dbReference type="SUPFAM" id="SSF109998">
    <property type="entry name" value="Triger factor/SurA peptide-binding domain-like"/>
    <property type="match status" value="1"/>
</dbReference>
<dbReference type="SUPFAM" id="SSF102735">
    <property type="entry name" value="Trigger factor ribosome-binding domain"/>
    <property type="match status" value="1"/>
</dbReference>
<dbReference type="PROSITE" id="PS50059">
    <property type="entry name" value="FKBP_PPIASE"/>
    <property type="match status" value="1"/>
</dbReference>
<comment type="function">
    <text evidence="1">Involved in protein export. Acts as a chaperone by maintaining the newly synthesized protein in an open conformation. Functions as a peptidyl-prolyl cis-trans isomerase.</text>
</comment>
<comment type="catalytic activity">
    <reaction evidence="1">
        <text>[protein]-peptidylproline (omega=180) = [protein]-peptidylproline (omega=0)</text>
        <dbReference type="Rhea" id="RHEA:16237"/>
        <dbReference type="Rhea" id="RHEA-COMP:10747"/>
        <dbReference type="Rhea" id="RHEA-COMP:10748"/>
        <dbReference type="ChEBI" id="CHEBI:83833"/>
        <dbReference type="ChEBI" id="CHEBI:83834"/>
        <dbReference type="EC" id="5.2.1.8"/>
    </reaction>
</comment>
<comment type="subcellular location">
    <subcellularLocation>
        <location>Cytoplasm</location>
    </subcellularLocation>
    <text evidence="1">About half TF is bound to the ribosome near the polypeptide exit tunnel while the other half is free in the cytoplasm.</text>
</comment>
<comment type="domain">
    <text evidence="1">Consists of 3 domains; the N-terminus binds the ribosome, the middle domain has PPIase activity, while the C-terminus has intrinsic chaperone activity on its own.</text>
</comment>
<comment type="similarity">
    <text evidence="1">Belongs to the FKBP-type PPIase family. Tig subfamily.</text>
</comment>
<keyword id="KW-0131">Cell cycle</keyword>
<keyword id="KW-0132">Cell division</keyword>
<keyword id="KW-0143">Chaperone</keyword>
<keyword id="KW-0963">Cytoplasm</keyword>
<keyword id="KW-0413">Isomerase</keyword>
<keyword id="KW-0697">Rotamase</keyword>
<feature type="chain" id="PRO_1000115520" description="Trigger factor">
    <location>
        <begin position="1"/>
        <end position="427"/>
    </location>
</feature>
<feature type="domain" description="PPIase FKBP-type" evidence="1">
    <location>
        <begin position="163"/>
        <end position="248"/>
    </location>
</feature>
<name>TIG_CLOBA</name>
<sequence length="427" mass="48408">MEAKVEKIETNVVKLEIKVEAEKFDAALTKAYNKNKGKYNVPGFRKGKVPMAILKKMYGIEIFYDDAVNIAIDESYNEALKAEDIRPVDYPKVDIVEIGEGKELVYTATVTTYPEVEIGEYKGLDIKKPSYEVSEEEVEKQVKEMQSKNARVETKEEGTIADGNIAIIDFKGFVDGEAFEGGEGTDYPLEIGSGTFIDNFEEQLVGLAIGDKKEVNVTFPENYGKEELNAKPAMFEVTVKGIKVKELPELDDEFAKEVSEFDTLAELKENVKKRLEESNNERAEREFEEAVITSIIETSKIDLPEVMLTKEIDSMMKDLESRLQYQGLSLDQYMEFTGNTIEKMREFMKENAERKVKADIILEAVAKAEEVKATDEQLNERALELGRMYGPKDPKKMANILLKAQKAMIEKDIIIENTLKLIKESCK</sequence>
<gene>
    <name evidence="1" type="primary">tig</name>
    <name type="ordered locus">CLH_2619</name>
</gene>
<organism>
    <name type="scientific">Clostridium botulinum (strain Alaska E43 / Type E3)</name>
    <dbReference type="NCBI Taxonomy" id="508767"/>
    <lineage>
        <taxon>Bacteria</taxon>
        <taxon>Bacillati</taxon>
        <taxon>Bacillota</taxon>
        <taxon>Clostridia</taxon>
        <taxon>Eubacteriales</taxon>
        <taxon>Clostridiaceae</taxon>
        <taxon>Clostridium</taxon>
    </lineage>
</organism>
<proteinExistence type="inferred from homology"/>
<protein>
    <recommendedName>
        <fullName evidence="1">Trigger factor</fullName>
        <shortName evidence="1">TF</shortName>
        <ecNumber evidence="1">5.2.1.8</ecNumber>
    </recommendedName>
    <alternativeName>
        <fullName evidence="1">PPIase</fullName>
    </alternativeName>
</protein>
<evidence type="ECO:0000255" key="1">
    <source>
        <dbReference type="HAMAP-Rule" id="MF_00303"/>
    </source>
</evidence>
<accession>B2UX14</accession>
<reference key="1">
    <citation type="submission" date="2008-05" db="EMBL/GenBank/DDBJ databases">
        <title>Complete genome sequence of Clostridium botulinum E3 str. Alaska E43.</title>
        <authorList>
            <person name="Brinkac L.M."/>
            <person name="Brown J.L."/>
            <person name="Bruce D."/>
            <person name="Detter C."/>
            <person name="Munk C."/>
            <person name="Smith L.A."/>
            <person name="Smith T.J."/>
            <person name="Sutton G."/>
            <person name="Brettin T.S."/>
        </authorList>
    </citation>
    <scope>NUCLEOTIDE SEQUENCE [LARGE SCALE GENOMIC DNA]</scope>
    <source>
        <strain>Alaska E43 / Type E3</strain>
    </source>
</reference>